<accession>C6DJD2</accession>
<feature type="chain" id="PRO_1000211735" description="D-aminoacyl-tRNA deacylase">
    <location>
        <begin position="1"/>
        <end position="145"/>
    </location>
</feature>
<feature type="short sequence motif" description="Gly-cisPro motif, important for rejection of L-amino acids" evidence="1">
    <location>
        <begin position="137"/>
        <end position="138"/>
    </location>
</feature>
<name>DTD_PECCP</name>
<keyword id="KW-0963">Cytoplasm</keyword>
<keyword id="KW-0378">Hydrolase</keyword>
<keyword id="KW-0694">RNA-binding</keyword>
<keyword id="KW-0820">tRNA-binding</keyword>
<organism>
    <name type="scientific">Pectobacterium carotovorum subsp. carotovorum (strain PC1)</name>
    <dbReference type="NCBI Taxonomy" id="561230"/>
    <lineage>
        <taxon>Bacteria</taxon>
        <taxon>Pseudomonadati</taxon>
        <taxon>Pseudomonadota</taxon>
        <taxon>Gammaproteobacteria</taxon>
        <taxon>Enterobacterales</taxon>
        <taxon>Pectobacteriaceae</taxon>
        <taxon>Pectobacterium</taxon>
    </lineage>
</organism>
<comment type="function">
    <text evidence="1">An aminoacyl-tRNA editing enzyme that deacylates mischarged D-aminoacyl-tRNAs. Also deacylates mischarged glycyl-tRNA(Ala), protecting cells against glycine mischarging by AlaRS. Acts via tRNA-based rather than protein-based catalysis; rejects L-amino acids rather than detecting D-amino acids in the active site. By recycling D-aminoacyl-tRNA to D-amino acids and free tRNA molecules, this enzyme counteracts the toxicity associated with the formation of D-aminoacyl-tRNA entities in vivo and helps enforce protein L-homochirality.</text>
</comment>
<comment type="catalytic activity">
    <reaction evidence="1">
        <text>glycyl-tRNA(Ala) + H2O = tRNA(Ala) + glycine + H(+)</text>
        <dbReference type="Rhea" id="RHEA:53744"/>
        <dbReference type="Rhea" id="RHEA-COMP:9657"/>
        <dbReference type="Rhea" id="RHEA-COMP:13640"/>
        <dbReference type="ChEBI" id="CHEBI:15377"/>
        <dbReference type="ChEBI" id="CHEBI:15378"/>
        <dbReference type="ChEBI" id="CHEBI:57305"/>
        <dbReference type="ChEBI" id="CHEBI:78442"/>
        <dbReference type="ChEBI" id="CHEBI:78522"/>
        <dbReference type="EC" id="3.1.1.96"/>
    </reaction>
</comment>
<comment type="catalytic activity">
    <reaction evidence="1">
        <text>a D-aminoacyl-tRNA + H2O = a tRNA + a D-alpha-amino acid + H(+)</text>
        <dbReference type="Rhea" id="RHEA:13953"/>
        <dbReference type="Rhea" id="RHEA-COMP:10123"/>
        <dbReference type="Rhea" id="RHEA-COMP:10124"/>
        <dbReference type="ChEBI" id="CHEBI:15377"/>
        <dbReference type="ChEBI" id="CHEBI:15378"/>
        <dbReference type="ChEBI" id="CHEBI:59871"/>
        <dbReference type="ChEBI" id="CHEBI:78442"/>
        <dbReference type="ChEBI" id="CHEBI:79333"/>
        <dbReference type="EC" id="3.1.1.96"/>
    </reaction>
</comment>
<comment type="subunit">
    <text evidence="1">Homodimer.</text>
</comment>
<comment type="subcellular location">
    <subcellularLocation>
        <location evidence="1">Cytoplasm</location>
    </subcellularLocation>
</comment>
<comment type="domain">
    <text evidence="1">A Gly-cisPro motif from one monomer fits into the active site of the other monomer to allow specific chiral rejection of L-amino acids.</text>
</comment>
<comment type="similarity">
    <text evidence="1">Belongs to the DTD family.</text>
</comment>
<proteinExistence type="inferred from homology"/>
<dbReference type="EC" id="3.1.1.96" evidence="1"/>
<dbReference type="EMBL" id="CP001657">
    <property type="protein sequence ID" value="ACT15231.1"/>
    <property type="molecule type" value="Genomic_DNA"/>
</dbReference>
<dbReference type="RefSeq" id="WP_015842298.1">
    <property type="nucleotide sequence ID" value="NC_012917.1"/>
</dbReference>
<dbReference type="SMR" id="C6DJD2"/>
<dbReference type="STRING" id="561230.PC1_4217"/>
<dbReference type="GeneID" id="67796201"/>
<dbReference type="KEGG" id="pct:PC1_4217"/>
<dbReference type="eggNOG" id="COG1490">
    <property type="taxonomic scope" value="Bacteria"/>
</dbReference>
<dbReference type="HOGENOM" id="CLU_076901_1_0_6"/>
<dbReference type="OrthoDB" id="9801395at2"/>
<dbReference type="Proteomes" id="UP000002736">
    <property type="component" value="Chromosome"/>
</dbReference>
<dbReference type="GO" id="GO:0005737">
    <property type="term" value="C:cytoplasm"/>
    <property type="evidence" value="ECO:0007669"/>
    <property type="project" value="UniProtKB-SubCell"/>
</dbReference>
<dbReference type="GO" id="GO:0051500">
    <property type="term" value="F:D-tyrosyl-tRNA(Tyr) deacylase activity"/>
    <property type="evidence" value="ECO:0007669"/>
    <property type="project" value="TreeGrafter"/>
</dbReference>
<dbReference type="GO" id="GO:0106026">
    <property type="term" value="F:Gly-tRNA(Ala) deacylase activity"/>
    <property type="evidence" value="ECO:0007669"/>
    <property type="project" value="UniProtKB-UniRule"/>
</dbReference>
<dbReference type="GO" id="GO:0043908">
    <property type="term" value="F:Ser(Gly)-tRNA(Ala) hydrolase activity"/>
    <property type="evidence" value="ECO:0007669"/>
    <property type="project" value="UniProtKB-UniRule"/>
</dbReference>
<dbReference type="GO" id="GO:0000049">
    <property type="term" value="F:tRNA binding"/>
    <property type="evidence" value="ECO:0007669"/>
    <property type="project" value="UniProtKB-UniRule"/>
</dbReference>
<dbReference type="GO" id="GO:0019478">
    <property type="term" value="P:D-amino acid catabolic process"/>
    <property type="evidence" value="ECO:0007669"/>
    <property type="project" value="UniProtKB-UniRule"/>
</dbReference>
<dbReference type="CDD" id="cd00563">
    <property type="entry name" value="Dtyr_deacylase"/>
    <property type="match status" value="1"/>
</dbReference>
<dbReference type="FunFam" id="3.50.80.10:FF:000001">
    <property type="entry name" value="D-aminoacyl-tRNA deacylase"/>
    <property type="match status" value="1"/>
</dbReference>
<dbReference type="Gene3D" id="3.50.80.10">
    <property type="entry name" value="D-tyrosyl-tRNA(Tyr) deacylase"/>
    <property type="match status" value="1"/>
</dbReference>
<dbReference type="HAMAP" id="MF_00518">
    <property type="entry name" value="Deacylase_Dtd"/>
    <property type="match status" value="1"/>
</dbReference>
<dbReference type="InterPro" id="IPR003732">
    <property type="entry name" value="Daa-tRNA_deacyls_DTD"/>
</dbReference>
<dbReference type="InterPro" id="IPR023509">
    <property type="entry name" value="DTD-like_sf"/>
</dbReference>
<dbReference type="NCBIfam" id="TIGR00256">
    <property type="entry name" value="D-aminoacyl-tRNA deacylase"/>
    <property type="match status" value="1"/>
</dbReference>
<dbReference type="PANTHER" id="PTHR10472:SF5">
    <property type="entry name" value="D-AMINOACYL-TRNA DEACYLASE 1"/>
    <property type="match status" value="1"/>
</dbReference>
<dbReference type="PANTHER" id="PTHR10472">
    <property type="entry name" value="D-TYROSYL-TRNA TYR DEACYLASE"/>
    <property type="match status" value="1"/>
</dbReference>
<dbReference type="Pfam" id="PF02580">
    <property type="entry name" value="Tyr_Deacylase"/>
    <property type="match status" value="1"/>
</dbReference>
<dbReference type="SUPFAM" id="SSF69500">
    <property type="entry name" value="DTD-like"/>
    <property type="match status" value="1"/>
</dbReference>
<evidence type="ECO:0000255" key="1">
    <source>
        <dbReference type="HAMAP-Rule" id="MF_00518"/>
    </source>
</evidence>
<sequence length="145" mass="15874">MIALIQRVSSASVTVEGKVIGEIDKGLLILLGVEQGDDEQKATRLCERVLGYRIFGDDDGKMNLNVRQAGGNVLVVSQFTLVADTQRGMRPGFSRGAHPSEADRLYQYFVGQCREQGVHTETGQFAADMKVALVNDGPVTFWLQT</sequence>
<protein>
    <recommendedName>
        <fullName evidence="1">D-aminoacyl-tRNA deacylase</fullName>
        <shortName evidence="1">DTD</shortName>
        <ecNumber evidence="1">3.1.1.96</ecNumber>
    </recommendedName>
    <alternativeName>
        <fullName evidence="1">Gly-tRNA(Ala) deacylase</fullName>
    </alternativeName>
</protein>
<reference key="1">
    <citation type="submission" date="2009-07" db="EMBL/GenBank/DDBJ databases">
        <title>Complete sequence of Pectobacterium carotovorum subsp. carotovorum PC1.</title>
        <authorList>
            <consortium name="US DOE Joint Genome Institute"/>
            <person name="Lucas S."/>
            <person name="Copeland A."/>
            <person name="Lapidus A."/>
            <person name="Glavina del Rio T."/>
            <person name="Tice H."/>
            <person name="Bruce D."/>
            <person name="Goodwin L."/>
            <person name="Pitluck S."/>
            <person name="Munk A.C."/>
            <person name="Brettin T."/>
            <person name="Detter J.C."/>
            <person name="Han C."/>
            <person name="Tapia R."/>
            <person name="Larimer F."/>
            <person name="Land M."/>
            <person name="Hauser L."/>
            <person name="Kyrpides N."/>
            <person name="Mikhailova N."/>
            <person name="Balakrishnan V."/>
            <person name="Glasner J."/>
            <person name="Perna N.T."/>
        </authorList>
    </citation>
    <scope>NUCLEOTIDE SEQUENCE [LARGE SCALE GENOMIC DNA]</scope>
    <source>
        <strain>PC1</strain>
    </source>
</reference>
<gene>
    <name evidence="1" type="primary">dtd</name>
    <name type="ordered locus">PC1_4217</name>
</gene>